<protein>
    <recommendedName>
        <fullName>Thermonuclease</fullName>
        <shortName>TNase</shortName>
        <ecNumber>3.1.31.1</ecNumber>
    </recommendedName>
    <alternativeName>
        <fullName>Micrococcal nuclease</fullName>
    </alternativeName>
    <alternativeName>
        <fullName>Staphylococcal nuclease</fullName>
    </alternativeName>
</protein>
<comment type="function">
    <text evidence="1">Enzyme that catalyzes the hydrolysis of both DNA and RNA at the 5' position of the phosphodiester bond.</text>
</comment>
<comment type="catalytic activity">
    <reaction evidence="4 5">
        <text>Endonucleolytic cleavage to nucleoside 3'-phosphates and 3'-phosphooligonucleotide end-products.</text>
        <dbReference type="EC" id="3.1.31.1"/>
    </reaction>
</comment>
<comment type="cofactor">
    <cofactor evidence="1">
        <name>Ca(2+)</name>
        <dbReference type="ChEBI" id="CHEBI:29108"/>
    </cofactor>
    <text evidence="1">Binds 1 Ca(2+) ion per subunit.</text>
</comment>
<comment type="subcellular location">
    <subcellularLocation>
        <location evidence="1">Secreted</location>
    </subcellularLocation>
</comment>
<comment type="similarity">
    <text evidence="3">Belongs to the thermonuclease family.</text>
</comment>
<accession>Q99VJ0</accession>
<organism>
    <name type="scientific">Staphylococcus aureus (strain Mu50 / ATCC 700699)</name>
    <dbReference type="NCBI Taxonomy" id="158878"/>
    <lineage>
        <taxon>Bacteria</taxon>
        <taxon>Bacillati</taxon>
        <taxon>Bacillota</taxon>
        <taxon>Bacilli</taxon>
        <taxon>Bacillales</taxon>
        <taxon>Staphylococcaceae</taxon>
        <taxon>Staphylococcus</taxon>
    </lineage>
</organism>
<proteinExistence type="inferred from homology"/>
<dbReference type="EC" id="3.1.31.1"/>
<dbReference type="EMBL" id="BA000017">
    <property type="protein sequence ID" value="BAB56977.1"/>
    <property type="molecule type" value="Genomic_DNA"/>
</dbReference>
<dbReference type="RefSeq" id="WP_000141557.1">
    <property type="nucleotide sequence ID" value="NC_002758.2"/>
</dbReference>
<dbReference type="SMR" id="Q99VJ0"/>
<dbReference type="KEGG" id="sav:SAV0815"/>
<dbReference type="HOGENOM" id="CLU_046484_5_2_9"/>
<dbReference type="PhylomeDB" id="Q99VJ0"/>
<dbReference type="Proteomes" id="UP000002481">
    <property type="component" value="Chromosome"/>
</dbReference>
<dbReference type="GO" id="GO:0005576">
    <property type="term" value="C:extracellular region"/>
    <property type="evidence" value="ECO:0007669"/>
    <property type="project" value="UniProtKB-SubCell"/>
</dbReference>
<dbReference type="GO" id="GO:0016894">
    <property type="term" value="F:endonuclease activity, active with either ribo- or deoxyribonucleic acids and producing 3'-phosphomonoesters"/>
    <property type="evidence" value="ECO:0007669"/>
    <property type="project" value="UniProtKB-EC"/>
</dbReference>
<dbReference type="GO" id="GO:0046872">
    <property type="term" value="F:metal ion binding"/>
    <property type="evidence" value="ECO:0007669"/>
    <property type="project" value="UniProtKB-KW"/>
</dbReference>
<dbReference type="GO" id="GO:0003676">
    <property type="term" value="F:nucleic acid binding"/>
    <property type="evidence" value="ECO:0007669"/>
    <property type="project" value="InterPro"/>
</dbReference>
<dbReference type="CDD" id="cd00175">
    <property type="entry name" value="SNc"/>
    <property type="match status" value="1"/>
</dbReference>
<dbReference type="FunFam" id="2.40.50.90:FF:000025">
    <property type="entry name" value="Thermonuclease"/>
    <property type="match status" value="1"/>
</dbReference>
<dbReference type="Gene3D" id="2.40.50.90">
    <property type="match status" value="1"/>
</dbReference>
<dbReference type="InterPro" id="IPR035437">
    <property type="entry name" value="SNase_OB-fold_sf"/>
</dbReference>
<dbReference type="InterPro" id="IPR016071">
    <property type="entry name" value="Staphylococal_nuclease_OB-fold"/>
</dbReference>
<dbReference type="InterPro" id="IPR002071">
    <property type="entry name" value="Thermonucl_AS"/>
</dbReference>
<dbReference type="PANTHER" id="PTHR12302">
    <property type="entry name" value="EBNA2 BINDING PROTEIN P100"/>
    <property type="match status" value="1"/>
</dbReference>
<dbReference type="PANTHER" id="PTHR12302:SF3">
    <property type="entry name" value="SERINE_THREONINE-PROTEIN KINASE 31"/>
    <property type="match status" value="1"/>
</dbReference>
<dbReference type="Pfam" id="PF00565">
    <property type="entry name" value="SNase"/>
    <property type="match status" value="1"/>
</dbReference>
<dbReference type="SMART" id="SM00318">
    <property type="entry name" value="SNc"/>
    <property type="match status" value="1"/>
</dbReference>
<dbReference type="SUPFAM" id="SSF50199">
    <property type="entry name" value="Staphylococcal nuclease"/>
    <property type="match status" value="1"/>
</dbReference>
<dbReference type="PROSITE" id="PS01123">
    <property type="entry name" value="TNASE_1"/>
    <property type="match status" value="1"/>
</dbReference>
<dbReference type="PROSITE" id="PS01284">
    <property type="entry name" value="TNASE_2"/>
    <property type="match status" value="1"/>
</dbReference>
<dbReference type="PROSITE" id="PS50830">
    <property type="entry name" value="TNASE_3"/>
    <property type="match status" value="1"/>
</dbReference>
<evidence type="ECO:0000250" key="1"/>
<evidence type="ECO:0000255" key="2"/>
<evidence type="ECO:0000255" key="3">
    <source>
        <dbReference type="PROSITE-ProRule" id="PRU00272"/>
    </source>
</evidence>
<evidence type="ECO:0000255" key="4">
    <source>
        <dbReference type="PROSITE-ProRule" id="PRU10048"/>
    </source>
</evidence>
<evidence type="ECO:0000255" key="5">
    <source>
        <dbReference type="PROSITE-ProRule" id="PRU10049"/>
    </source>
</evidence>
<evidence type="ECO:0000256" key="6">
    <source>
        <dbReference type="SAM" id="MobiDB-lite"/>
    </source>
</evidence>
<feature type="signal peptide" evidence="2">
    <location>
        <begin position="1"/>
        <end position="23"/>
    </location>
</feature>
<feature type="propeptide" id="PRO_0000045229" evidence="1">
    <location>
        <begin position="24"/>
        <end position="60"/>
    </location>
</feature>
<feature type="chain" id="PRO_0000045230" description="Thermonuclease">
    <location>
        <begin position="61"/>
        <end position="228"/>
    </location>
</feature>
<feature type="region of interest" description="Disordered" evidence="6">
    <location>
        <begin position="58"/>
        <end position="83"/>
    </location>
</feature>
<feature type="compositionally biased region" description="Polar residues" evidence="6">
    <location>
        <begin position="58"/>
        <end position="70"/>
    </location>
</feature>
<feature type="active site" evidence="1">
    <location>
        <position position="114"/>
    </location>
</feature>
<feature type="active site" evidence="1">
    <location>
        <position position="122"/>
    </location>
</feature>
<feature type="active site" evidence="1">
    <location>
        <position position="166"/>
    </location>
</feature>
<feature type="binding site" evidence="3">
    <location>
        <position position="100"/>
    </location>
    <ligand>
        <name>Ca(2+)</name>
        <dbReference type="ChEBI" id="CHEBI:29108"/>
    </ligand>
</feature>
<feature type="binding site" evidence="3">
    <location>
        <position position="119"/>
    </location>
    <ligand>
        <name>Ca(2+)</name>
        <dbReference type="ChEBI" id="CHEBI:29108"/>
    </ligand>
</feature>
<feature type="binding site" evidence="3">
    <location>
        <position position="120"/>
    </location>
    <ligand>
        <name>Ca(2+)</name>
        <dbReference type="ChEBI" id="CHEBI:29108"/>
    </ligand>
</feature>
<keyword id="KW-0106">Calcium</keyword>
<keyword id="KW-0255">Endonuclease</keyword>
<keyword id="KW-0378">Hydrolase</keyword>
<keyword id="KW-0479">Metal-binding</keyword>
<keyword id="KW-0540">Nuclease</keyword>
<keyword id="KW-0964">Secreted</keyword>
<keyword id="KW-0732">Signal</keyword>
<keyword id="KW-0865">Zymogen</keyword>
<reference key="1">
    <citation type="journal article" date="2001" name="Lancet">
        <title>Whole genome sequencing of meticillin-resistant Staphylococcus aureus.</title>
        <authorList>
            <person name="Kuroda M."/>
            <person name="Ohta T."/>
            <person name="Uchiyama I."/>
            <person name="Baba T."/>
            <person name="Yuzawa H."/>
            <person name="Kobayashi I."/>
            <person name="Cui L."/>
            <person name="Oguchi A."/>
            <person name="Aoki K."/>
            <person name="Nagai Y."/>
            <person name="Lian J.-Q."/>
            <person name="Ito T."/>
            <person name="Kanamori M."/>
            <person name="Matsumaru H."/>
            <person name="Maruyama A."/>
            <person name="Murakami H."/>
            <person name="Hosoyama A."/>
            <person name="Mizutani-Ui Y."/>
            <person name="Takahashi N.K."/>
            <person name="Sawano T."/>
            <person name="Inoue R."/>
            <person name="Kaito C."/>
            <person name="Sekimizu K."/>
            <person name="Hirakawa H."/>
            <person name="Kuhara S."/>
            <person name="Goto S."/>
            <person name="Yabuzaki J."/>
            <person name="Kanehisa M."/>
            <person name="Yamashita A."/>
            <person name="Oshima K."/>
            <person name="Furuya K."/>
            <person name="Yoshino C."/>
            <person name="Shiba T."/>
            <person name="Hattori M."/>
            <person name="Ogasawara N."/>
            <person name="Hayashi H."/>
            <person name="Hiramatsu K."/>
        </authorList>
    </citation>
    <scope>NUCLEOTIDE SEQUENCE [LARGE SCALE GENOMIC DNA]</scope>
    <source>
        <strain>Mu50 / ATCC 700699</strain>
    </source>
</reference>
<name>NUC_STAAM</name>
<sequence>MTEYLLSAGICMAIVSILLIGMAISNVSKGQYAKRFFFFATSCLVLTLVVVSSLSSSANASQTDNGVNRSGSEDPTVYSATSTKKLHKEPATLIKAIDGDTVKLMYKGQPMTFRLLLVDTPETKHPKKGVEKYGPEASAFTKKMVENANKIEVEFDKGQRTDKYGRGLAYIYADGKMVNEALVRQGLAKVAYVYKPNNTHEQLLRKSEAQAKKEKLNIWSEDNADSGQ</sequence>
<gene>
    <name type="primary">nuc</name>
    <name type="ordered locus">SAV0815</name>
</gene>